<organism>
    <name type="scientific">Francisella tularensis subsp. holarctica (strain LVS)</name>
    <dbReference type="NCBI Taxonomy" id="376619"/>
    <lineage>
        <taxon>Bacteria</taxon>
        <taxon>Pseudomonadati</taxon>
        <taxon>Pseudomonadota</taxon>
        <taxon>Gammaproteobacteria</taxon>
        <taxon>Thiotrichales</taxon>
        <taxon>Francisellaceae</taxon>
        <taxon>Francisella</taxon>
    </lineage>
</organism>
<keyword id="KW-1185">Reference proteome</keyword>
<keyword id="KW-0678">Repressor</keyword>
<keyword id="KW-0687">Ribonucleoprotein</keyword>
<keyword id="KW-0689">Ribosomal protein</keyword>
<keyword id="KW-0694">RNA-binding</keyword>
<keyword id="KW-0699">rRNA-binding</keyword>
<keyword id="KW-0810">Translation regulation</keyword>
<keyword id="KW-0820">tRNA-binding</keyword>
<reference key="1">
    <citation type="submission" date="2006-03" db="EMBL/GenBank/DDBJ databases">
        <title>Complete genome sequence of Francisella tularensis LVS (Live Vaccine Strain).</title>
        <authorList>
            <person name="Chain P."/>
            <person name="Larimer F."/>
            <person name="Land M."/>
            <person name="Stilwagen S."/>
            <person name="Larsson P."/>
            <person name="Bearden S."/>
            <person name="Chu M."/>
            <person name="Oyston P."/>
            <person name="Forsman M."/>
            <person name="Andersson S."/>
            <person name="Lindler L."/>
            <person name="Titball R."/>
            <person name="Garcia E."/>
        </authorList>
    </citation>
    <scope>NUCLEOTIDE SEQUENCE [LARGE SCALE GENOMIC DNA]</scope>
    <source>
        <strain>LVS</strain>
    </source>
</reference>
<sequence>MMAKVSKRMKEISAKINAEKKYPVSEAFDLLREVSSVKFVESVDVSVALGVDPRKSDQVVRGASVLPNGTGKTVRVAVFAKGPAADAAKEAGAEVVGMEDLADEVKKGNMDFDVVIASPDSMRVVGQLGQILGPKGLMPNPKIGTVTMDVAKAVRDAKAGQVRYRVDKAGIIHTTIGKVNFTSDALKQNLEQLLTDLKKAKPAVSKGIYLKKVSVSSTMGPGINVDFSDLNI</sequence>
<name>RL1_FRATH</name>
<gene>
    <name evidence="1" type="primary">rplA</name>
    <name type="ordered locus">FTL_1747</name>
</gene>
<comment type="function">
    <text evidence="1">Binds directly to 23S rRNA. The L1 stalk is quite mobile in the ribosome, and is involved in E site tRNA release.</text>
</comment>
<comment type="function">
    <text evidence="1">Protein L1 is also a translational repressor protein, it controls the translation of the L11 operon by binding to its mRNA.</text>
</comment>
<comment type="subunit">
    <text evidence="1">Part of the 50S ribosomal subunit.</text>
</comment>
<comment type="similarity">
    <text evidence="1">Belongs to the universal ribosomal protein uL1 family.</text>
</comment>
<proteinExistence type="inferred from homology"/>
<feature type="chain" id="PRO_0000308007" description="Large ribosomal subunit protein uL1">
    <location>
        <begin position="1"/>
        <end position="232"/>
    </location>
</feature>
<protein>
    <recommendedName>
        <fullName evidence="1">Large ribosomal subunit protein uL1</fullName>
    </recommendedName>
    <alternativeName>
        <fullName evidence="2">50S ribosomal protein L1</fullName>
    </alternativeName>
</protein>
<evidence type="ECO:0000255" key="1">
    <source>
        <dbReference type="HAMAP-Rule" id="MF_01318"/>
    </source>
</evidence>
<evidence type="ECO:0000305" key="2"/>
<dbReference type="EMBL" id="AM233362">
    <property type="protein sequence ID" value="CAJ80186.1"/>
    <property type="molecule type" value="Genomic_DNA"/>
</dbReference>
<dbReference type="SMR" id="Q2A1M4"/>
<dbReference type="KEGG" id="ftl:FTL_1747"/>
<dbReference type="Proteomes" id="UP000001944">
    <property type="component" value="Chromosome"/>
</dbReference>
<dbReference type="GO" id="GO:0022625">
    <property type="term" value="C:cytosolic large ribosomal subunit"/>
    <property type="evidence" value="ECO:0007669"/>
    <property type="project" value="TreeGrafter"/>
</dbReference>
<dbReference type="GO" id="GO:0019843">
    <property type="term" value="F:rRNA binding"/>
    <property type="evidence" value="ECO:0007669"/>
    <property type="project" value="UniProtKB-UniRule"/>
</dbReference>
<dbReference type="GO" id="GO:0003735">
    <property type="term" value="F:structural constituent of ribosome"/>
    <property type="evidence" value="ECO:0007669"/>
    <property type="project" value="InterPro"/>
</dbReference>
<dbReference type="GO" id="GO:0000049">
    <property type="term" value="F:tRNA binding"/>
    <property type="evidence" value="ECO:0007669"/>
    <property type="project" value="UniProtKB-KW"/>
</dbReference>
<dbReference type="GO" id="GO:0006417">
    <property type="term" value="P:regulation of translation"/>
    <property type="evidence" value="ECO:0007669"/>
    <property type="project" value="UniProtKB-KW"/>
</dbReference>
<dbReference type="GO" id="GO:0006412">
    <property type="term" value="P:translation"/>
    <property type="evidence" value="ECO:0007669"/>
    <property type="project" value="UniProtKB-UniRule"/>
</dbReference>
<dbReference type="CDD" id="cd00403">
    <property type="entry name" value="Ribosomal_L1"/>
    <property type="match status" value="1"/>
</dbReference>
<dbReference type="FunFam" id="3.40.50.790:FF:000001">
    <property type="entry name" value="50S ribosomal protein L1"/>
    <property type="match status" value="1"/>
</dbReference>
<dbReference type="Gene3D" id="3.30.190.20">
    <property type="match status" value="1"/>
</dbReference>
<dbReference type="Gene3D" id="3.40.50.790">
    <property type="match status" value="1"/>
</dbReference>
<dbReference type="HAMAP" id="MF_01318_B">
    <property type="entry name" value="Ribosomal_uL1_B"/>
    <property type="match status" value="1"/>
</dbReference>
<dbReference type="InterPro" id="IPR005878">
    <property type="entry name" value="Ribosom_uL1_bac-type"/>
</dbReference>
<dbReference type="InterPro" id="IPR002143">
    <property type="entry name" value="Ribosomal_uL1"/>
</dbReference>
<dbReference type="InterPro" id="IPR023674">
    <property type="entry name" value="Ribosomal_uL1-like"/>
</dbReference>
<dbReference type="InterPro" id="IPR028364">
    <property type="entry name" value="Ribosomal_uL1/biogenesis"/>
</dbReference>
<dbReference type="InterPro" id="IPR016095">
    <property type="entry name" value="Ribosomal_uL1_3-a/b-sand"/>
</dbReference>
<dbReference type="InterPro" id="IPR023673">
    <property type="entry name" value="Ribosomal_uL1_CS"/>
</dbReference>
<dbReference type="NCBIfam" id="TIGR01169">
    <property type="entry name" value="rplA_bact"/>
    <property type="match status" value="1"/>
</dbReference>
<dbReference type="PANTHER" id="PTHR36427">
    <property type="entry name" value="54S RIBOSOMAL PROTEIN L1, MITOCHONDRIAL"/>
    <property type="match status" value="1"/>
</dbReference>
<dbReference type="PANTHER" id="PTHR36427:SF3">
    <property type="entry name" value="LARGE RIBOSOMAL SUBUNIT PROTEIN UL1M"/>
    <property type="match status" value="1"/>
</dbReference>
<dbReference type="Pfam" id="PF00687">
    <property type="entry name" value="Ribosomal_L1"/>
    <property type="match status" value="1"/>
</dbReference>
<dbReference type="PIRSF" id="PIRSF002155">
    <property type="entry name" value="Ribosomal_L1"/>
    <property type="match status" value="1"/>
</dbReference>
<dbReference type="SUPFAM" id="SSF56808">
    <property type="entry name" value="Ribosomal protein L1"/>
    <property type="match status" value="1"/>
</dbReference>
<dbReference type="PROSITE" id="PS01199">
    <property type="entry name" value="RIBOSOMAL_L1"/>
    <property type="match status" value="1"/>
</dbReference>
<accession>Q2A1M4</accession>